<proteinExistence type="evidence at protein level"/>
<keyword id="KW-0002">3D-structure</keyword>
<keyword id="KW-0007">Acetylation</keyword>
<keyword id="KW-0479">Metal-binding</keyword>
<keyword id="KW-0539">Nucleus</keyword>
<keyword id="KW-0597">Phosphoprotein</keyword>
<keyword id="KW-1267">Proteomics identification</keyword>
<keyword id="KW-1185">Reference proteome</keyword>
<keyword id="KW-0687">Ribonucleoprotein</keyword>
<keyword id="KW-0694">RNA-binding</keyword>
<keyword id="KW-0862">Zinc</keyword>
<keyword id="KW-0863">Zinc-finger</keyword>
<evidence type="ECO:0000255" key="1">
    <source>
        <dbReference type="HAMAP-Rule" id="MF_03153"/>
    </source>
</evidence>
<evidence type="ECO:0000256" key="2">
    <source>
        <dbReference type="SAM" id="MobiDB-lite"/>
    </source>
</evidence>
<evidence type="ECO:0000269" key="3">
    <source>
    </source>
</evidence>
<evidence type="ECO:0000269" key="4">
    <source>
    </source>
</evidence>
<evidence type="ECO:0000269" key="5">
    <source>
    </source>
</evidence>
<evidence type="ECO:0000269" key="6">
    <source>
    </source>
</evidence>
<evidence type="ECO:0000269" key="7">
    <source>
    </source>
</evidence>
<evidence type="ECO:0000269" key="8">
    <source>
    </source>
</evidence>
<evidence type="ECO:0000269" key="9">
    <source>
    </source>
</evidence>
<evidence type="ECO:0000269" key="10">
    <source>
    </source>
</evidence>
<evidence type="ECO:0000305" key="11"/>
<evidence type="ECO:0007744" key="12">
    <source>
        <dbReference type="PDB" id="4PJO"/>
    </source>
</evidence>
<evidence type="ECO:0007744" key="13">
    <source>
    </source>
</evidence>
<evidence type="ECO:0007744" key="14">
    <source>
    </source>
</evidence>
<evidence type="ECO:0007744" key="15">
    <source>
    </source>
</evidence>
<evidence type="ECO:0007744" key="16">
    <source>
    </source>
</evidence>
<evidence type="ECO:0007829" key="17">
    <source>
        <dbReference type="PDB" id="6ELD"/>
    </source>
</evidence>
<evidence type="ECO:0007829" key="18">
    <source>
        <dbReference type="PDB" id="7VPX"/>
    </source>
</evidence>
<organism>
    <name type="scientific">Homo sapiens</name>
    <name type="common">Human</name>
    <dbReference type="NCBI Taxonomy" id="9606"/>
    <lineage>
        <taxon>Eukaryota</taxon>
        <taxon>Metazoa</taxon>
        <taxon>Chordata</taxon>
        <taxon>Craniata</taxon>
        <taxon>Vertebrata</taxon>
        <taxon>Euteleostomi</taxon>
        <taxon>Mammalia</taxon>
        <taxon>Eutheria</taxon>
        <taxon>Euarchontoglires</taxon>
        <taxon>Primates</taxon>
        <taxon>Haplorrhini</taxon>
        <taxon>Catarrhini</taxon>
        <taxon>Hominidae</taxon>
        <taxon>Homo</taxon>
    </lineage>
</organism>
<reference key="1">
    <citation type="journal article" date="1988" name="Nucleic Acids Res.">
        <title>Human U1 snRNP-specific C protein: complete cDNA and protein sequence and identification of a multigene family in mammals.</title>
        <authorList>
            <person name="Sillekens P.T.G."/>
            <person name="Beijer R.P."/>
            <person name="Habets W.J."/>
            <person name="van Venrooij W.J."/>
        </authorList>
    </citation>
    <scope>NUCLEOTIDE SEQUENCE [MRNA]</scope>
</reference>
<reference key="2">
    <citation type="journal article" date="2003" name="Nature">
        <title>The DNA sequence and analysis of human chromosome 6.</title>
        <authorList>
            <person name="Mungall A.J."/>
            <person name="Palmer S.A."/>
            <person name="Sims S.K."/>
            <person name="Edwards C.A."/>
            <person name="Ashurst J.L."/>
            <person name="Wilming L."/>
            <person name="Jones M.C."/>
            <person name="Horton R."/>
            <person name="Hunt S.E."/>
            <person name="Scott C.E."/>
            <person name="Gilbert J.G.R."/>
            <person name="Clamp M.E."/>
            <person name="Bethel G."/>
            <person name="Milne S."/>
            <person name="Ainscough R."/>
            <person name="Almeida J.P."/>
            <person name="Ambrose K.D."/>
            <person name="Andrews T.D."/>
            <person name="Ashwell R.I.S."/>
            <person name="Babbage A.K."/>
            <person name="Bagguley C.L."/>
            <person name="Bailey J."/>
            <person name="Banerjee R."/>
            <person name="Barker D.J."/>
            <person name="Barlow K.F."/>
            <person name="Bates K."/>
            <person name="Beare D.M."/>
            <person name="Beasley H."/>
            <person name="Beasley O."/>
            <person name="Bird C.P."/>
            <person name="Blakey S.E."/>
            <person name="Bray-Allen S."/>
            <person name="Brook J."/>
            <person name="Brown A.J."/>
            <person name="Brown J.Y."/>
            <person name="Burford D.C."/>
            <person name="Burrill W."/>
            <person name="Burton J."/>
            <person name="Carder C."/>
            <person name="Carter N.P."/>
            <person name="Chapman J.C."/>
            <person name="Clark S.Y."/>
            <person name="Clark G."/>
            <person name="Clee C.M."/>
            <person name="Clegg S."/>
            <person name="Cobley V."/>
            <person name="Collier R.E."/>
            <person name="Collins J.E."/>
            <person name="Colman L.K."/>
            <person name="Corby N.R."/>
            <person name="Coville G.J."/>
            <person name="Culley K.M."/>
            <person name="Dhami P."/>
            <person name="Davies J."/>
            <person name="Dunn M."/>
            <person name="Earthrowl M.E."/>
            <person name="Ellington A.E."/>
            <person name="Evans K.A."/>
            <person name="Faulkner L."/>
            <person name="Francis M.D."/>
            <person name="Frankish A."/>
            <person name="Frankland J."/>
            <person name="French L."/>
            <person name="Garner P."/>
            <person name="Garnett J."/>
            <person name="Ghori M.J."/>
            <person name="Gilby L.M."/>
            <person name="Gillson C.J."/>
            <person name="Glithero R.J."/>
            <person name="Grafham D.V."/>
            <person name="Grant M."/>
            <person name="Gribble S."/>
            <person name="Griffiths C."/>
            <person name="Griffiths M.N.D."/>
            <person name="Hall R."/>
            <person name="Halls K.S."/>
            <person name="Hammond S."/>
            <person name="Harley J.L."/>
            <person name="Hart E.A."/>
            <person name="Heath P.D."/>
            <person name="Heathcott R."/>
            <person name="Holmes S.J."/>
            <person name="Howden P.J."/>
            <person name="Howe K.L."/>
            <person name="Howell G.R."/>
            <person name="Huckle E."/>
            <person name="Humphray S.J."/>
            <person name="Humphries M.D."/>
            <person name="Hunt A.R."/>
            <person name="Johnson C.M."/>
            <person name="Joy A.A."/>
            <person name="Kay M."/>
            <person name="Keenan S.J."/>
            <person name="Kimberley A.M."/>
            <person name="King A."/>
            <person name="Laird G.K."/>
            <person name="Langford C."/>
            <person name="Lawlor S."/>
            <person name="Leongamornlert D.A."/>
            <person name="Leversha M."/>
            <person name="Lloyd C.R."/>
            <person name="Lloyd D.M."/>
            <person name="Loveland J.E."/>
            <person name="Lovell J."/>
            <person name="Martin S."/>
            <person name="Mashreghi-Mohammadi M."/>
            <person name="Maslen G.L."/>
            <person name="Matthews L."/>
            <person name="McCann O.T."/>
            <person name="McLaren S.J."/>
            <person name="McLay K."/>
            <person name="McMurray A."/>
            <person name="Moore M.J.F."/>
            <person name="Mullikin J.C."/>
            <person name="Niblett D."/>
            <person name="Nickerson T."/>
            <person name="Novik K.L."/>
            <person name="Oliver K."/>
            <person name="Overton-Larty E.K."/>
            <person name="Parker A."/>
            <person name="Patel R."/>
            <person name="Pearce A.V."/>
            <person name="Peck A.I."/>
            <person name="Phillimore B.J.C.T."/>
            <person name="Phillips S."/>
            <person name="Plumb R.W."/>
            <person name="Porter K.M."/>
            <person name="Ramsey Y."/>
            <person name="Ranby S.A."/>
            <person name="Rice C.M."/>
            <person name="Ross M.T."/>
            <person name="Searle S.M."/>
            <person name="Sehra H.K."/>
            <person name="Sheridan E."/>
            <person name="Skuce C.D."/>
            <person name="Smith S."/>
            <person name="Smith M."/>
            <person name="Spraggon L."/>
            <person name="Squares S.L."/>
            <person name="Steward C.A."/>
            <person name="Sycamore N."/>
            <person name="Tamlyn-Hall G."/>
            <person name="Tester J."/>
            <person name="Theaker A.J."/>
            <person name="Thomas D.W."/>
            <person name="Thorpe A."/>
            <person name="Tracey A."/>
            <person name="Tromans A."/>
            <person name="Tubby B."/>
            <person name="Wall M."/>
            <person name="Wallis J.M."/>
            <person name="West A.P."/>
            <person name="White S.S."/>
            <person name="Whitehead S.L."/>
            <person name="Whittaker H."/>
            <person name="Wild A."/>
            <person name="Willey D.J."/>
            <person name="Wilmer T.E."/>
            <person name="Wood J.M."/>
            <person name="Wray P.W."/>
            <person name="Wyatt J.C."/>
            <person name="Young L."/>
            <person name="Younger R.M."/>
            <person name="Bentley D.R."/>
            <person name="Coulson A."/>
            <person name="Durbin R.M."/>
            <person name="Hubbard T."/>
            <person name="Sulston J.E."/>
            <person name="Dunham I."/>
            <person name="Rogers J."/>
            <person name="Beck S."/>
        </authorList>
    </citation>
    <scope>NUCLEOTIDE SEQUENCE [LARGE SCALE GENOMIC DNA]</scope>
</reference>
<reference key="3">
    <citation type="journal article" date="1988" name="J. Immunol.">
        <title>Isolation and characterization of a complementary DNA expressing human U1 small nuclear ribonucleoprotein C polypeptide.</title>
        <authorList>
            <person name="Yamamoto K."/>
            <person name="Miura H."/>
            <person name="Moroi Y."/>
            <person name="Yoshinoya S."/>
            <person name="Goto M."/>
            <person name="Nishioka K."/>
            <person name="Miyamoto T."/>
        </authorList>
    </citation>
    <scope>NUCLEOTIDE SEQUENCE [MRNA] OF 25-131</scope>
</reference>
<reference key="4">
    <citation type="journal article" date="1990" name="Science">
        <title>U1-specific protein C needed for efficient complex formation of U1 snRNP with a 5' splice site.</title>
        <authorList>
            <person name="Heinrichs V."/>
            <person name="Bach M."/>
            <person name="Winkelmann G."/>
            <person name="Luehrmann R."/>
        </authorList>
    </citation>
    <scope>FUNCTION</scope>
    <scope>SUBUNIT</scope>
</reference>
<reference key="5">
    <citation type="journal article" date="1991" name="Nucleic Acids Res.">
        <title>Zinc finger-like structure in U1-specific protein C is essential for specific binding to U1 snRNP.</title>
        <authorList>
            <person name="Nelissen R.L.H."/>
            <person name="Heinrichs V."/>
            <person name="Habets W.J."/>
            <person name="Simons F."/>
            <person name="Luehrmann R."/>
            <person name="van Venrooij W.J."/>
        </authorList>
    </citation>
    <scope>FUNCTION</scope>
    <scope>MUTAGENESIS OF CYS-6; CYS-9; HIS-24; CYS-25 AND HIS-30</scope>
</reference>
<reference key="6">
    <citation type="journal article" date="1996" name="J. Biol. Chem.">
        <title>Involvement of U1 small nuclear ribonucleoproteins (snRNP) in 5' splice site-U1 snRNP interaction.</title>
        <authorList>
            <person name="Rossi F."/>
            <person name="Forne T."/>
            <person name="Antoine E."/>
            <person name="Tazi J."/>
            <person name="Brunel C."/>
            <person name="Cathala G."/>
        </authorList>
    </citation>
    <scope>FUNCTION</scope>
</reference>
<reference key="7">
    <citation type="journal article" date="2002" name="EMBO J.">
        <title>The splicing regulator TIA-1 interacts with U1-C to promote U1 snRNP recruitment to 5' splice sites.</title>
        <authorList>
            <person name="Foerch P."/>
            <person name="Puig O."/>
            <person name="Martinez C."/>
            <person name="Seraphin B."/>
            <person name="Valcarcel J."/>
        </authorList>
    </citation>
    <scope>INTERACTION WITH TIA1</scope>
</reference>
<reference key="8">
    <citation type="journal article" date="2005" name="J. Biol. Chem.">
        <title>Protein stoichiometry of a multiprotein complex, the human spliceosomal U1 small nuclear ribonucleoprotein: absolute quantification using isotope-coded tags and mass spectrometry.</title>
        <authorList>
            <person name="Hochleitner E.O."/>
            <person name="Kastner B."/>
            <person name="Froehlich T."/>
            <person name="Schmidt A."/>
            <person name="Luehrmann R."/>
            <person name="Arnold G."/>
            <person name="Lottspeich F."/>
        </authorList>
    </citation>
    <scope>IDENTIFICATION IN THE U1 SNRNP COMPLEX</scope>
    <scope>IDENTIFICATION BY MASS SPECTROMETRY</scope>
</reference>
<reference key="9">
    <citation type="journal article" date="2005" name="Nat. Biotechnol.">
        <title>Immunoaffinity profiling of tyrosine phosphorylation in cancer cells.</title>
        <authorList>
            <person name="Rush J."/>
            <person name="Moritz A."/>
            <person name="Lee K.A."/>
            <person name="Guo A."/>
            <person name="Goss V.L."/>
            <person name="Spek E.J."/>
            <person name="Zhang H."/>
            <person name="Zha X.-M."/>
            <person name="Polakiewicz R.D."/>
            <person name="Comb M.J."/>
        </authorList>
    </citation>
    <scope>PHOSPHORYLATION [LARGE SCALE ANALYSIS] AT TYR-8</scope>
    <scope>IDENTIFICATION BY MASS SPECTROMETRY [LARGE SCALE ANALYSIS]</scope>
</reference>
<reference key="10">
    <citation type="journal article" date="2008" name="Proc. Natl. Acad. Sci. U.S.A.">
        <title>A quantitative atlas of mitotic phosphorylation.</title>
        <authorList>
            <person name="Dephoure N."/>
            <person name="Zhou C."/>
            <person name="Villen J."/>
            <person name="Beausoleil S.A."/>
            <person name="Bakalarski C.E."/>
            <person name="Elledge S.J."/>
            <person name="Gygi S.P."/>
        </authorList>
    </citation>
    <scope>PHOSPHORYLATION [LARGE SCALE ANALYSIS] AT SER-17</scope>
    <scope>IDENTIFICATION BY MASS SPECTROMETRY [LARGE SCALE ANALYSIS]</scope>
    <source>
        <tissue>Cervix carcinoma</tissue>
    </source>
</reference>
<reference key="11">
    <citation type="journal article" date="2009" name="Science">
        <title>Lysine acetylation targets protein complexes and co-regulates major cellular functions.</title>
        <authorList>
            <person name="Choudhary C."/>
            <person name="Kumar C."/>
            <person name="Gnad F."/>
            <person name="Nielsen M.L."/>
            <person name="Rehman M."/>
            <person name="Walther T.C."/>
            <person name="Olsen J.V."/>
            <person name="Mann M."/>
        </authorList>
    </citation>
    <scope>ACETYLATION [LARGE SCALE ANALYSIS] AT LYS-52</scope>
    <scope>IDENTIFICATION BY MASS SPECTROMETRY [LARGE SCALE ANALYSIS]</scope>
</reference>
<reference key="12">
    <citation type="journal article" date="2010" name="Sci. Signal.">
        <title>Quantitative phosphoproteomics reveals widespread full phosphorylation site occupancy during mitosis.</title>
        <authorList>
            <person name="Olsen J.V."/>
            <person name="Vermeulen M."/>
            <person name="Santamaria A."/>
            <person name="Kumar C."/>
            <person name="Miller M.L."/>
            <person name="Jensen L.J."/>
            <person name="Gnad F."/>
            <person name="Cox J."/>
            <person name="Jensen T.S."/>
            <person name="Nigg E.A."/>
            <person name="Brunak S."/>
            <person name="Mann M."/>
        </authorList>
    </citation>
    <scope>IDENTIFICATION BY MASS SPECTROMETRY [LARGE SCALE ANALYSIS]</scope>
    <source>
        <tissue>Cervix carcinoma</tissue>
    </source>
</reference>
<reference key="13">
    <citation type="journal article" date="2011" name="BMC Syst. Biol.">
        <title>Initial characterization of the human central proteome.</title>
        <authorList>
            <person name="Burkard T.R."/>
            <person name="Planyavsky M."/>
            <person name="Kaupe I."/>
            <person name="Breitwieser F.P."/>
            <person name="Buerckstuemmer T."/>
            <person name="Bennett K.L."/>
            <person name="Superti-Furga G."/>
            <person name="Colinge J."/>
        </authorList>
    </citation>
    <scope>IDENTIFICATION BY MASS SPECTROMETRY [LARGE SCALE ANALYSIS]</scope>
</reference>
<reference key="14">
    <citation type="journal article" date="2013" name="J. Proteome Res.">
        <title>Toward a comprehensive characterization of a human cancer cell phosphoproteome.</title>
        <authorList>
            <person name="Zhou H."/>
            <person name="Di Palma S."/>
            <person name="Preisinger C."/>
            <person name="Peng M."/>
            <person name="Polat A.N."/>
            <person name="Heck A.J."/>
            <person name="Mohammed S."/>
        </authorList>
    </citation>
    <scope>PHOSPHORYLATION [LARGE SCALE ANALYSIS] AT SER-17</scope>
    <scope>IDENTIFICATION BY MASS SPECTROMETRY [LARGE SCALE ANALYSIS]</scope>
    <source>
        <tissue>Erythroleukemia</tissue>
    </source>
</reference>
<reference key="15">
    <citation type="journal article" date="2014" name="J. Proteomics">
        <title>An enzyme assisted RP-RPLC approach for in-depth analysis of human liver phosphoproteome.</title>
        <authorList>
            <person name="Bian Y."/>
            <person name="Song C."/>
            <person name="Cheng K."/>
            <person name="Dong M."/>
            <person name="Wang F."/>
            <person name="Huang J."/>
            <person name="Sun D."/>
            <person name="Wang L."/>
            <person name="Ye M."/>
            <person name="Zou H."/>
        </authorList>
    </citation>
    <scope>IDENTIFICATION BY MASS SPECTROMETRY [LARGE SCALE ANALYSIS]</scope>
    <source>
        <tissue>Liver</tissue>
    </source>
</reference>
<reference key="16">
    <citation type="journal article" date="2004" name="J. Mol. Biol.">
        <title>The structure and biochemical properties of the human spliceosomal protein U1C.</title>
        <authorList>
            <person name="Muto Y."/>
            <person name="Pomeranz Krummel D."/>
            <person name="Oubridge C."/>
            <person name="Hernandez H."/>
            <person name="Robinson C.V."/>
            <person name="Neuhaus D."/>
            <person name="Nagai K."/>
        </authorList>
    </citation>
    <scope>STRUCTURE BY NMR OF 1-61</scope>
    <scope>SUBUNIT</scope>
    <scope>DOMAIN ZINC-FINGER</scope>
</reference>
<reference key="17">
    <citation type="journal article" date="2009" name="Nature">
        <title>Crystal structure of human spliceosomal U1 snRNP at 5.5 A resolution.</title>
        <authorList>
            <person name="Pomeranz Krummel D.A."/>
            <person name="Oubridge C."/>
            <person name="Leung A.K."/>
            <person name="Li J."/>
            <person name="Nagai K."/>
        </authorList>
    </citation>
    <scope>X-RAY CRYSTALLOGRAPHY (5.49 ANGSTROMS) OF 1-77 IN SPLICEOSOMAL U1 SNRNP</scope>
    <scope>SUBUNIT</scope>
    <scope>FUNCTION</scope>
</reference>
<reference evidence="12" key="18">
    <citation type="journal article" date="2015" name="Elife">
        <title>Crystal structure of human U1 snRNP, a small nuclear ribonucleoprotein particle, reveals the mechanism of 5' splice site recognition.</title>
        <authorList>
            <person name="Kondo Y."/>
            <person name="Oubridge C."/>
            <person name="van Roon A.M."/>
            <person name="Nagai K."/>
        </authorList>
    </citation>
    <scope>X-RAY CRYSTALLOGRAPHY (3.30 ANGSTROMS) OF 1-61 IN COMPLEX WITH ZINC</scope>
    <scope>SUBUNIT</scope>
</reference>
<protein>
    <recommendedName>
        <fullName evidence="1">U1 small nuclear ribonucleoprotein C</fullName>
        <shortName evidence="1">U1 snRNP C</shortName>
        <shortName evidence="1">U1-C</shortName>
        <shortName evidence="1">U1C</shortName>
    </recommendedName>
</protein>
<name>RU1C_HUMAN</name>
<comment type="function">
    <text evidence="1 6 7 8 10">Component of the spliceosomal U1 snRNP, which is essential for recognition of the pre-mRNA 5' splice-site and the subsequent assembly of the spliceosome. SNRPC/U1-C is directly involved in initial 5' splice-site recognition for both constitutive and regulated alternative splicing. The interaction with the 5' splice-site seems to precede base-pairing between the pre-mRNA and the U1 snRNA. Stimulates commitment or early (E) complex formation by stabilizing the base pairing of the 5' end of the U1 snRNA and the 5' splice-site region.</text>
</comment>
<comment type="subunit">
    <text evidence="1 3 4 5 7 8 9">Component of the U1 snRNP (PubMed:2136774). The U1 snRNP is composed of the U1 snRNA and the 7 core Sm proteins SNRPB, SNRPD1, SNRPD2, SNRPD3, SNRPE, SNRPF and SNRPG that assemble in a heptameric protein ring on the Sm site of the small nuclear RNA to form the core snRNP, and at least 3 U1 snRNP-specific proteins SNRNP70/U1-70K, SNRPA/U1-A and SNRPC/U1-C. SNRPC/U1-C interacts with U1 snRNA and the 5' splice-site region of the pre-mRNA. Interacts (via N-terminus) with TIA1 (via C-terminus); thereby promoting spliceosomal U1 snRNP recruitment to 5' splice sites (PubMed:12486009).</text>
</comment>
<comment type="interaction">
    <interactant intactId="EBI-766589">
        <id>P09234</id>
    </interactant>
    <interactant intactId="EBI-11976299">
        <id>Q5BKX5-3</id>
        <label>ACTMAP</label>
    </interactant>
    <organismsDiffer>false</organismsDiffer>
    <experiments>3</experiments>
</comment>
<comment type="interaction">
    <interactant intactId="EBI-766589">
        <id>P09234</id>
    </interactant>
    <interactant intactId="EBI-357530">
        <id>Q9ULX6</id>
        <label>AKAP8L</label>
    </interactant>
    <organismsDiffer>false</organismsDiffer>
    <experiments>4</experiments>
</comment>
<comment type="interaction">
    <interactant intactId="EBI-766589">
        <id>P09234</id>
    </interactant>
    <interactant intactId="EBI-12102070">
        <id>Q9NXR5-2</id>
        <label>ANKRD10</label>
    </interactant>
    <organismsDiffer>false</organismsDiffer>
    <experiments>3</experiments>
</comment>
<comment type="interaction">
    <interactant intactId="EBI-766589">
        <id>P09234</id>
    </interactant>
    <interactant intactId="EBI-750254">
        <id>Q9BRR9</id>
        <label>ARHGAP9</label>
    </interactant>
    <organismsDiffer>false</organismsDiffer>
    <experiments>3</experiments>
</comment>
<comment type="interaction">
    <interactant intactId="EBI-766589">
        <id>P09234</id>
    </interactant>
    <interactant intactId="EBI-2949658">
        <id>O95429</id>
        <label>BAG4</label>
    </interactant>
    <organismsDiffer>false</organismsDiffer>
    <experiments>3</experiments>
</comment>
<comment type="interaction">
    <interactant intactId="EBI-766589">
        <id>P09234</id>
    </interactant>
    <interactant intactId="EBI-1050106">
        <id>O75934</id>
        <label>BCAS2</label>
    </interactant>
    <organismsDiffer>false</organismsDiffer>
    <experiments>4</experiments>
</comment>
<comment type="interaction">
    <interactant intactId="EBI-766589">
        <id>P09234</id>
    </interactant>
    <interactant intactId="EBI-11983447">
        <id>Q8N9W6-4</id>
        <label>BOLL</label>
    </interactant>
    <organismsDiffer>false</organismsDiffer>
    <experiments>3</experiments>
</comment>
<comment type="interaction">
    <interactant intactId="EBI-766589">
        <id>P09234</id>
    </interactant>
    <interactant intactId="EBI-12884642">
        <id>Q03060-25</id>
        <label>CREM</label>
    </interactant>
    <organismsDiffer>false</organismsDiffer>
    <experiments>3</experiments>
</comment>
<comment type="interaction">
    <interactant intactId="EBI-766589">
        <id>P09234</id>
    </interactant>
    <interactant intactId="EBI-3867333">
        <id>A8MQ03</id>
        <label>CYSRT1</label>
    </interactant>
    <organismsDiffer>false</organismsDiffer>
    <experiments>3</experiments>
</comment>
<comment type="interaction">
    <interactant intactId="EBI-766589">
        <id>P09234</id>
    </interactant>
    <interactant intactId="EBI-724310">
        <id>Q15038</id>
        <label>DAZAP2</label>
    </interactant>
    <organismsDiffer>false</organismsDiffer>
    <experiments>3</experiments>
</comment>
<comment type="interaction">
    <interactant intactId="EBI-766589">
        <id>P09234</id>
    </interactant>
    <interactant intactId="EBI-947964">
        <id>Q16610</id>
        <label>ECM1</label>
    </interactant>
    <organismsDiffer>false</organismsDiffer>
    <experiments>3</experiments>
</comment>
<comment type="interaction">
    <interactant intactId="EBI-766589">
        <id>P09234</id>
    </interactant>
    <interactant intactId="EBI-371922">
        <id>Q96B26</id>
        <label>EXOSC8</label>
    </interactant>
    <organismsDiffer>false</organismsDiffer>
    <experiments>3</experiments>
</comment>
<comment type="interaction">
    <interactant intactId="EBI-766589">
        <id>P09234</id>
    </interactant>
    <interactant intactId="EBI-12807776">
        <id>O00167-2</id>
        <label>EYA2</label>
    </interactant>
    <organismsDiffer>false</organismsDiffer>
    <experiments>3</experiments>
</comment>
<comment type="interaction">
    <interactant intactId="EBI-766589">
        <id>P09234</id>
    </interactant>
    <interactant intactId="EBI-12193763">
        <id>A1KXE4-2</id>
        <label>FAM168B</label>
    </interactant>
    <organismsDiffer>false</organismsDiffer>
    <experiments>3</experiments>
</comment>
<comment type="interaction">
    <interactant intactId="EBI-766589">
        <id>P09234</id>
    </interactant>
    <interactant intactId="EBI-741101">
        <id>Q13643</id>
        <label>FHL3</label>
    </interactant>
    <organismsDiffer>false</organismsDiffer>
    <experiments>3</experiments>
</comment>
<comment type="interaction">
    <interactant intactId="EBI-766589">
        <id>P09234</id>
    </interactant>
    <interactant intactId="EBI-12121668">
        <id>Q96AE4-2</id>
        <label>FUBP1</label>
    </interactant>
    <organismsDiffer>false</organismsDiffer>
    <experiments>3</experiments>
</comment>
<comment type="interaction">
    <interactant intactId="EBI-766589">
        <id>P09234</id>
    </interactant>
    <interactant intactId="EBI-947774">
        <id>O75420</id>
        <label>GIGYF1</label>
    </interactant>
    <organismsDiffer>false</organismsDiffer>
    <experiments>3</experiments>
</comment>
<comment type="interaction">
    <interactant intactId="EBI-766589">
        <id>P09234</id>
    </interactant>
    <interactant intactId="EBI-299727">
        <id>O14979</id>
        <label>HNRNPDL</label>
    </interactant>
    <organismsDiffer>false</organismsDiffer>
    <experiments>4</experiments>
</comment>
<comment type="interaction">
    <interactant intactId="EBI-766589">
        <id>P09234</id>
    </interactant>
    <interactant intactId="EBI-351590">
        <id>P31943</id>
        <label>HNRNPH1</label>
    </interactant>
    <organismsDiffer>false</organismsDiffer>
    <experiments>3</experiments>
</comment>
<comment type="interaction">
    <interactant intactId="EBI-766589">
        <id>P09234</id>
    </interactant>
    <interactant intactId="EBI-740785">
        <id>P49639</id>
        <label>HOXA1</label>
    </interactant>
    <organismsDiffer>false</organismsDiffer>
    <experiments>5</experiments>
</comment>
<comment type="interaction">
    <interactant intactId="EBI-766589">
        <id>P09234</id>
    </interactant>
    <interactant intactId="EBI-742664">
        <id>Q9BPX1</id>
        <label>HSD17B14</label>
    </interactant>
    <organismsDiffer>false</organismsDiffer>
    <experiments>3</experiments>
</comment>
<comment type="interaction">
    <interactant intactId="EBI-766589">
        <id>P09234</id>
    </interactant>
    <interactant intactId="EBI-748258">
        <id>Q5TA45</id>
        <label>INTS11</label>
    </interactant>
    <organismsDiffer>false</organismsDiffer>
    <experiments>3</experiments>
</comment>
<comment type="interaction">
    <interactant intactId="EBI-766589">
        <id>P09234</id>
    </interactant>
    <interactant intactId="EBI-9090173">
        <id>P0C870</id>
        <label>JMJD7</label>
    </interactant>
    <organismsDiffer>false</organismsDiffer>
    <experiments>5</experiments>
</comment>
<comment type="interaction">
    <interactant intactId="EBI-766589">
        <id>P09234</id>
    </interactant>
    <interactant intactId="EBI-8284732">
        <id>Q13351</id>
        <label>KLF1</label>
    </interactant>
    <organismsDiffer>false</organismsDiffer>
    <experiments>3</experiments>
</comment>
<comment type="interaction">
    <interactant intactId="EBI-766589">
        <id>P09234</id>
    </interactant>
    <interactant intactId="EBI-1052037">
        <id>Q8IUC1</id>
        <label>KRTAP11-1</label>
    </interactant>
    <organismsDiffer>false</organismsDiffer>
    <experiments>3</experiments>
</comment>
<comment type="interaction">
    <interactant intactId="EBI-766589">
        <id>P09234</id>
    </interactant>
    <interactant intactId="EBI-11953846">
        <id>Q52LG2</id>
        <label>KRTAP13-2</label>
    </interactant>
    <organismsDiffer>false</organismsDiffer>
    <experiments>3</experiments>
</comment>
<comment type="interaction">
    <interactant intactId="EBI-766589">
        <id>P09234</id>
    </interactant>
    <interactant intactId="EBI-12196745">
        <id>Q3LHN2</id>
        <label>KRTAP19-2</label>
    </interactant>
    <organismsDiffer>false</organismsDiffer>
    <experiments>3</experiments>
</comment>
<comment type="interaction">
    <interactant intactId="EBI-766589">
        <id>P09234</id>
    </interactant>
    <interactant intactId="EBI-1048945">
        <id>Q3LI72</id>
        <label>KRTAP19-5</label>
    </interactant>
    <organismsDiffer>false</organismsDiffer>
    <experiments>3</experiments>
</comment>
<comment type="interaction">
    <interactant intactId="EBI-766589">
        <id>P09234</id>
    </interactant>
    <interactant intactId="EBI-12805508">
        <id>Q3LI70</id>
        <label>KRTAP19-6</label>
    </interactant>
    <organismsDiffer>false</organismsDiffer>
    <experiments>3</experiments>
</comment>
<comment type="interaction">
    <interactant intactId="EBI-766589">
        <id>P09234</id>
    </interactant>
    <interactant intactId="EBI-18395721">
        <id>Q3LI59</id>
        <label>KRTAP21-2</label>
    </interactant>
    <organismsDiffer>false</organismsDiffer>
    <experiments>3</experiments>
</comment>
<comment type="interaction">
    <interactant intactId="EBI-766589">
        <id>P09234</id>
    </interactant>
    <interactant intactId="EBI-11962084">
        <id>Q3LI66</id>
        <label>KRTAP6-2</label>
    </interactant>
    <organismsDiffer>false</organismsDiffer>
    <experiments>5</experiments>
</comment>
<comment type="interaction">
    <interactant intactId="EBI-766589">
        <id>P09234</id>
    </interactant>
    <interactant intactId="EBI-22311199">
        <id>Q3LI67</id>
        <label>KRTAP6-3</label>
    </interactant>
    <organismsDiffer>false</organismsDiffer>
    <experiments>3</experiments>
</comment>
<comment type="interaction">
    <interactant intactId="EBI-766589">
        <id>P09234</id>
    </interactant>
    <interactant intactId="EBI-18394498">
        <id>Q8IUC3</id>
        <label>KRTAP7-1</label>
    </interactant>
    <organismsDiffer>false</organismsDiffer>
    <experiments>3</experiments>
</comment>
<comment type="interaction">
    <interactant intactId="EBI-766589">
        <id>P09234</id>
    </interactant>
    <interactant intactId="EBI-10261141">
        <id>Q8IUC2</id>
        <label>KRTAP8-1</label>
    </interactant>
    <organismsDiffer>false</organismsDiffer>
    <experiments>3</experiments>
</comment>
<comment type="interaction">
    <interactant intactId="EBI-766589">
        <id>P09234</id>
    </interactant>
    <interactant intactId="EBI-716006">
        <id>Q9Y5V3</id>
        <label>MAGED1</label>
    </interactant>
    <organismsDiffer>false</organismsDiffer>
    <experiments>3</experiments>
</comment>
<comment type="interaction">
    <interactant intactId="EBI-766589">
        <id>P09234</id>
    </interactant>
    <interactant intactId="EBI-8487781">
        <id>Q8N6F8</id>
        <label>METTL27</label>
    </interactant>
    <organismsDiffer>false</organismsDiffer>
    <experiments>3</experiments>
</comment>
<comment type="interaction">
    <interactant intactId="EBI-766589">
        <id>P09234</id>
    </interactant>
    <interactant intactId="EBI-2340269">
        <id>Q13064</id>
        <label>MKRN3</label>
    </interactant>
    <organismsDiffer>false</organismsDiffer>
    <experiments>3</experiments>
</comment>
<comment type="interaction">
    <interactant intactId="EBI-766589">
        <id>P09234</id>
    </interactant>
    <interactant intactId="EBI-10963850">
        <id>Q9NZQ3-3</id>
        <label>NCKIPSD</label>
    </interactant>
    <organismsDiffer>false</organismsDiffer>
    <experiments>3</experiments>
</comment>
<comment type="interaction">
    <interactant intactId="EBI-766589">
        <id>P09234</id>
    </interactant>
    <interactant intactId="EBI-5774125">
        <id>A1E959</id>
        <label>ODAM</label>
    </interactant>
    <organismsDiffer>false</organismsDiffer>
    <experiments>3</experiments>
</comment>
<comment type="interaction">
    <interactant intactId="EBI-766589">
        <id>P09234</id>
    </interactant>
    <interactant intactId="EBI-726466">
        <id>O15496</id>
        <label>PLA2G10</label>
    </interactant>
    <organismsDiffer>false</organismsDiffer>
    <experiments>3</experiments>
</comment>
<comment type="interaction">
    <interactant intactId="EBI-766589">
        <id>P09234</id>
    </interactant>
    <interactant intactId="EBI-3957793">
        <id>Q9GZV8</id>
        <label>PRDM14</label>
    </interactant>
    <organismsDiffer>false</organismsDiffer>
    <experiments>3</experiments>
</comment>
<comment type="interaction">
    <interactant intactId="EBI-766589">
        <id>P09234</id>
    </interactant>
    <interactant intactId="EBI-12754095">
        <id>P86480</id>
        <label>PRR20D</label>
    </interactant>
    <organismsDiffer>false</organismsDiffer>
    <experiments>3</experiments>
</comment>
<comment type="interaction">
    <interactant intactId="EBI-766589">
        <id>P09234</id>
    </interactant>
    <interactant intactId="EBI-744023">
        <id>Q9BTL3</id>
        <label>RAMAC</label>
    </interactant>
    <organismsDiffer>false</organismsDiffer>
    <experiments>3</experiments>
</comment>
<comment type="interaction">
    <interactant intactId="EBI-766589">
        <id>P09234</id>
    </interactant>
    <interactant intactId="EBI-721525">
        <id>P98175</id>
        <label>RBM10</label>
    </interactant>
    <organismsDiffer>false</organismsDiffer>
    <experiments>2</experiments>
</comment>
<comment type="interaction">
    <interactant intactId="EBI-766589">
        <id>P09234</id>
    </interactant>
    <interactant intactId="EBI-740343">
        <id>Q93062-3</id>
        <label>RBPMS</label>
    </interactant>
    <organismsDiffer>false</organismsDiffer>
    <experiments>3</experiments>
</comment>
<comment type="interaction">
    <interactant intactId="EBI-766589">
        <id>P09234</id>
    </interactant>
    <interactant intactId="EBI-948076">
        <id>Q9P2R6</id>
        <label>RERE</label>
    </interactant>
    <organismsDiffer>false</organismsDiffer>
    <experiments>3</experiments>
</comment>
<comment type="interaction">
    <interactant intactId="EBI-766589">
        <id>P09234</id>
    </interactant>
    <interactant intactId="EBI-12001422">
        <id>Q01196-8</id>
        <label>RUNX1</label>
    </interactant>
    <organismsDiffer>false</organismsDiffer>
    <experiments>3</experiments>
</comment>
<comment type="interaction">
    <interactant intactId="EBI-766589">
        <id>P09234</id>
    </interactant>
    <interactant intactId="EBI-742673">
        <id>Q15437</id>
        <label>SEC23B</label>
    </interactant>
    <organismsDiffer>false</organismsDiffer>
    <experiments>3</experiments>
</comment>
<comment type="interaction">
    <interactant intactId="EBI-766589">
        <id>P09234</id>
    </interactant>
    <interactant intactId="EBI-2462271">
        <id>Q15428</id>
        <label>SF3A2</label>
    </interactant>
    <organismsDiffer>false</organismsDiffer>
    <experiments>2</experiments>
</comment>
<comment type="interaction">
    <interactant intactId="EBI-766589">
        <id>P09234</id>
    </interactant>
    <interactant intactId="EBI-11959123">
        <id>Q99932-2</id>
        <label>SPAG8</label>
    </interactant>
    <organismsDiffer>false</organismsDiffer>
    <experiments>3</experiments>
</comment>
<comment type="interaction">
    <interactant intactId="EBI-766589">
        <id>P09234</id>
    </interactant>
    <interactant intactId="EBI-12843506">
        <id>Q8IWL8</id>
        <label>STH</label>
    </interactant>
    <organismsDiffer>false</organismsDiffer>
    <experiments>3</experiments>
</comment>
<comment type="interaction">
    <interactant intactId="EBI-766589">
        <id>P09234</id>
    </interactant>
    <interactant intactId="EBI-1387216">
        <id>P31483</id>
        <label>TIA1</label>
    </interactant>
    <organismsDiffer>false</organismsDiffer>
    <experiments>6</experiments>
</comment>
<comment type="interaction">
    <interactant intactId="EBI-766589">
        <id>P09234</id>
    </interactant>
    <interactant intactId="EBI-11741437">
        <id>Q08117-2</id>
        <label>TLE5</label>
    </interactant>
    <organismsDiffer>false</organismsDiffer>
    <experiments>3</experiments>
</comment>
<comment type="interaction">
    <interactant intactId="EBI-766589">
        <id>P09234</id>
    </interactant>
    <interactant intactId="EBI-492476">
        <id>Q96RU7</id>
        <label>TRIB3</label>
    </interactant>
    <organismsDiffer>false</organismsDiffer>
    <experiments>3</experiments>
</comment>
<comment type="interaction">
    <interactant intactId="EBI-766589">
        <id>P09234</id>
    </interactant>
    <interactant intactId="EBI-12068150">
        <id>Q6NVU6</id>
        <label>UFSP1</label>
    </interactant>
    <organismsDiffer>false</organismsDiffer>
    <experiments>3</experiments>
</comment>
<comment type="interaction">
    <interactant intactId="EBI-766589">
        <id>P09234</id>
    </interactant>
    <interactant intactId="EBI-7705033">
        <id>Q9BRX9</id>
        <label>WDR83</label>
    </interactant>
    <organismsDiffer>false</organismsDiffer>
    <experiments>2</experiments>
</comment>
<comment type="interaction">
    <interactant intactId="EBI-766589">
        <id>P09234</id>
    </interactant>
    <interactant intactId="EBI-12040603">
        <id>Q9NZC7-5</id>
        <label>WWOX</label>
    </interactant>
    <organismsDiffer>false</organismsDiffer>
    <experiments>3</experiments>
</comment>
<comment type="interaction">
    <interactant intactId="EBI-766589">
        <id>P09234</id>
    </interactant>
    <interactant intactId="EBI-743923">
        <id>O00308</id>
        <label>WWP2</label>
    </interactant>
    <organismsDiffer>false</organismsDiffer>
    <experiments>3</experiments>
</comment>
<comment type="subcellular location">
    <subcellularLocation>
        <location evidence="1 8">Nucleus</location>
    </subcellularLocation>
</comment>
<comment type="similarity">
    <text evidence="1">Belongs to the U1 small nuclear ribonucleoprotein C family.</text>
</comment>
<sequence length="159" mass="17394">MPKFYCDYCDTYLTHDSPSVRKTHCSGRKHKENVKDYYQKWMEEQAQSLIDKTTAAFQQGKIPPTPFSAPPPAGAMIPPPPSLPGPPRPGMMPAPHMGGPPMMPMMGPPPPGMMPVGPAPGMRPPMGGHMPMMPGPPMMRPPARPMMVPTRPGMTRPDR</sequence>
<gene>
    <name evidence="1" type="primary">SNRPC</name>
</gene>
<dbReference type="EMBL" id="X12517">
    <property type="protein sequence ID" value="CAA31037.1"/>
    <property type="molecule type" value="mRNA"/>
</dbReference>
<dbReference type="EMBL" id="AL139100">
    <property type="status" value="NOT_ANNOTATED_CDS"/>
    <property type="molecule type" value="Genomic_DNA"/>
</dbReference>
<dbReference type="EMBL" id="M18465">
    <property type="protein sequence ID" value="AAA36618.1"/>
    <property type="molecule type" value="mRNA"/>
</dbReference>
<dbReference type="CCDS" id="CCDS34436.1"/>
<dbReference type="PIR" id="S01387">
    <property type="entry name" value="S01387"/>
</dbReference>
<dbReference type="RefSeq" id="NP_003084.1">
    <property type="nucleotide sequence ID" value="NM_003093.3"/>
</dbReference>
<dbReference type="PDB" id="2VRD">
    <property type="method" value="NMR"/>
    <property type="chains" value="A=1-61"/>
</dbReference>
<dbReference type="PDB" id="3CW1">
    <property type="method" value="X-ray"/>
    <property type="resolution" value="5.49 A"/>
    <property type="chains" value="0/9/L/l=1-77"/>
</dbReference>
<dbReference type="PDB" id="4PJO">
    <property type="method" value="X-ray"/>
    <property type="resolution" value="3.30 A"/>
    <property type="chains" value="L/M/l/m=1-61"/>
</dbReference>
<dbReference type="PDB" id="6ELD">
    <property type="method" value="X-ray"/>
    <property type="resolution" value="2.48 A"/>
    <property type="chains" value="A=30-61"/>
</dbReference>
<dbReference type="PDB" id="6QX9">
    <property type="method" value="EM"/>
    <property type="resolution" value="3.28 A"/>
    <property type="chains" value="1C=1-159"/>
</dbReference>
<dbReference type="PDB" id="7VPX">
    <property type="method" value="EM"/>
    <property type="resolution" value="3.00 A"/>
    <property type="chains" value="N=1-159"/>
</dbReference>
<dbReference type="PDBsum" id="2VRD"/>
<dbReference type="PDBsum" id="3CW1"/>
<dbReference type="PDBsum" id="4PJO"/>
<dbReference type="PDBsum" id="6ELD"/>
<dbReference type="PDBsum" id="6QX9"/>
<dbReference type="PDBsum" id="7VPX"/>
<dbReference type="EMDB" id="EMD-32074"/>
<dbReference type="EMDB" id="EMD-4665"/>
<dbReference type="SMR" id="P09234"/>
<dbReference type="BioGRID" id="112515">
    <property type="interactions" value="439"/>
</dbReference>
<dbReference type="ComplexPortal" id="CPX-2392">
    <property type="entry name" value="U1 small nuclear ribonucleoprotein complex"/>
</dbReference>
<dbReference type="CORUM" id="P09234"/>
<dbReference type="DIP" id="DIP-34235N"/>
<dbReference type="FunCoup" id="P09234">
    <property type="interactions" value="2260"/>
</dbReference>
<dbReference type="IntAct" id="P09234">
    <property type="interactions" value="352"/>
</dbReference>
<dbReference type="MINT" id="P09234"/>
<dbReference type="STRING" id="9606.ENSP00000244520"/>
<dbReference type="GlyGen" id="P09234">
    <property type="glycosylation" value="2 sites, 1 O-linked glycan (1 site)"/>
</dbReference>
<dbReference type="iPTMnet" id="P09234"/>
<dbReference type="PhosphoSitePlus" id="P09234"/>
<dbReference type="SwissPalm" id="P09234"/>
<dbReference type="BioMuta" id="SNRPC"/>
<dbReference type="DMDM" id="134093"/>
<dbReference type="CPTAC" id="CPTAC-947"/>
<dbReference type="jPOST" id="P09234"/>
<dbReference type="MassIVE" id="P09234"/>
<dbReference type="PaxDb" id="9606-ENSP00000244520"/>
<dbReference type="PeptideAtlas" id="P09234"/>
<dbReference type="ProteomicsDB" id="52209"/>
<dbReference type="Pumba" id="P09234"/>
<dbReference type="Antibodypedia" id="45711">
    <property type="antibodies" value="70 antibodies from 21 providers"/>
</dbReference>
<dbReference type="DNASU" id="6631"/>
<dbReference type="Ensembl" id="ENST00000244520.10">
    <property type="protein sequence ID" value="ENSP00000244520.5"/>
    <property type="gene ID" value="ENSG00000124562.10"/>
</dbReference>
<dbReference type="GeneID" id="6631"/>
<dbReference type="KEGG" id="hsa:6631"/>
<dbReference type="MANE-Select" id="ENST00000244520.10">
    <property type="protein sequence ID" value="ENSP00000244520.5"/>
    <property type="RefSeq nucleotide sequence ID" value="NM_003093.3"/>
    <property type="RefSeq protein sequence ID" value="NP_003084.1"/>
</dbReference>
<dbReference type="AGR" id="HGNC:11157"/>
<dbReference type="CTD" id="6631"/>
<dbReference type="DisGeNET" id="6631"/>
<dbReference type="GeneCards" id="SNRPC"/>
<dbReference type="HGNC" id="HGNC:11157">
    <property type="gene designation" value="SNRPC"/>
</dbReference>
<dbReference type="HPA" id="ENSG00000124562">
    <property type="expression patterns" value="Low tissue specificity"/>
</dbReference>
<dbReference type="MIM" id="603522">
    <property type="type" value="gene"/>
</dbReference>
<dbReference type="neXtProt" id="NX_P09234"/>
<dbReference type="OpenTargets" id="ENSG00000124562"/>
<dbReference type="PharmGKB" id="PA35998"/>
<dbReference type="VEuPathDB" id="HostDB:ENSG00000124562"/>
<dbReference type="eggNOG" id="KOG3454">
    <property type="taxonomic scope" value="Eukaryota"/>
</dbReference>
<dbReference type="GeneTree" id="ENSGT00730000110997"/>
<dbReference type="HOGENOM" id="CLU_079697_3_0_1"/>
<dbReference type="InParanoid" id="P09234"/>
<dbReference type="OMA" id="QMRPPLM"/>
<dbReference type="OrthoDB" id="76567at2759"/>
<dbReference type="PAN-GO" id="P09234">
    <property type="GO annotations" value="3 GO annotations based on evolutionary models"/>
</dbReference>
<dbReference type="TreeFam" id="TF313578"/>
<dbReference type="PathwayCommons" id="P09234"/>
<dbReference type="Reactome" id="R-HSA-72163">
    <property type="pathway name" value="mRNA Splicing - Major Pathway"/>
</dbReference>
<dbReference type="SignaLink" id="P09234"/>
<dbReference type="SIGNOR" id="P09234"/>
<dbReference type="BioGRID-ORCS" id="6631">
    <property type="hits" value="590 hits in 1161 CRISPR screens"/>
</dbReference>
<dbReference type="CD-CODE" id="91857CE7">
    <property type="entry name" value="Nucleolus"/>
</dbReference>
<dbReference type="ChiTaRS" id="SNRPC">
    <property type="organism name" value="human"/>
</dbReference>
<dbReference type="EvolutionaryTrace" id="P09234"/>
<dbReference type="GeneWiki" id="Small_nuclear_ribonucleoprotein_polypeptide_C"/>
<dbReference type="GenomeRNAi" id="6631"/>
<dbReference type="Pharos" id="P09234">
    <property type="development level" value="Tbio"/>
</dbReference>
<dbReference type="PRO" id="PR:P09234"/>
<dbReference type="Proteomes" id="UP000005640">
    <property type="component" value="Chromosome 6"/>
</dbReference>
<dbReference type="RNAct" id="P09234">
    <property type="molecule type" value="protein"/>
</dbReference>
<dbReference type="Bgee" id="ENSG00000124562">
    <property type="expression patterns" value="Expressed in apex of heart and 210 other cell types or tissues"/>
</dbReference>
<dbReference type="ExpressionAtlas" id="P09234">
    <property type="expression patterns" value="baseline and differential"/>
</dbReference>
<dbReference type="GO" id="GO:0015030">
    <property type="term" value="C:Cajal body"/>
    <property type="evidence" value="ECO:0000314"/>
    <property type="project" value="UniProtKB"/>
</dbReference>
<dbReference type="GO" id="GO:0000243">
    <property type="term" value="C:commitment complex"/>
    <property type="evidence" value="ECO:0007669"/>
    <property type="project" value="UniProtKB-UniRule"/>
</dbReference>
<dbReference type="GO" id="GO:0005654">
    <property type="term" value="C:nucleoplasm"/>
    <property type="evidence" value="ECO:0000314"/>
    <property type="project" value="HPA"/>
</dbReference>
<dbReference type="GO" id="GO:0005634">
    <property type="term" value="C:nucleus"/>
    <property type="evidence" value="ECO:0000303"/>
    <property type="project" value="ComplexPortal"/>
</dbReference>
<dbReference type="GO" id="GO:0005681">
    <property type="term" value="C:spliceosomal complex"/>
    <property type="evidence" value="ECO:0000353"/>
    <property type="project" value="ComplexPortal"/>
</dbReference>
<dbReference type="GO" id="GO:0005685">
    <property type="term" value="C:U1 snRNP"/>
    <property type="evidence" value="ECO:0000314"/>
    <property type="project" value="UniProtKB"/>
</dbReference>
<dbReference type="GO" id="GO:0071004">
    <property type="term" value="C:U2-type prespliceosome"/>
    <property type="evidence" value="ECO:0007669"/>
    <property type="project" value="UniProtKB-UniRule"/>
</dbReference>
<dbReference type="GO" id="GO:0003729">
    <property type="term" value="F:mRNA binding"/>
    <property type="evidence" value="ECO:0007669"/>
    <property type="project" value="UniProtKB-UniRule"/>
</dbReference>
<dbReference type="GO" id="GO:0030627">
    <property type="term" value="F:pre-mRNA 5'-splice site binding"/>
    <property type="evidence" value="ECO:0000318"/>
    <property type="project" value="GO_Central"/>
</dbReference>
<dbReference type="GO" id="GO:0042803">
    <property type="term" value="F:protein homodimerization activity"/>
    <property type="evidence" value="ECO:0000353"/>
    <property type="project" value="UniProtKB"/>
</dbReference>
<dbReference type="GO" id="GO:0003723">
    <property type="term" value="F:RNA binding"/>
    <property type="evidence" value="ECO:0007005"/>
    <property type="project" value="UniProtKB"/>
</dbReference>
<dbReference type="GO" id="GO:0003727">
    <property type="term" value="F:single-stranded RNA binding"/>
    <property type="evidence" value="ECO:0000314"/>
    <property type="project" value="UniProtKB"/>
</dbReference>
<dbReference type="GO" id="GO:0008270">
    <property type="term" value="F:zinc ion binding"/>
    <property type="evidence" value="ECO:0000314"/>
    <property type="project" value="UniProtKB"/>
</dbReference>
<dbReference type="GO" id="GO:0000395">
    <property type="term" value="P:mRNA 5'-splice site recognition"/>
    <property type="evidence" value="ECO:0000318"/>
    <property type="project" value="GO_Central"/>
</dbReference>
<dbReference type="GO" id="GO:0000398">
    <property type="term" value="P:mRNA splicing, via spliceosome"/>
    <property type="evidence" value="ECO:0000314"/>
    <property type="project" value="UniProtKB"/>
</dbReference>
<dbReference type="GO" id="GO:0000387">
    <property type="term" value="P:spliceosomal snRNP assembly"/>
    <property type="evidence" value="ECO:0000314"/>
    <property type="project" value="UniProtKB"/>
</dbReference>
<dbReference type="FunFam" id="3.30.160.60:FF:000059">
    <property type="entry name" value="U1 small nuclear ribonucleoprotein C"/>
    <property type="match status" value="1"/>
</dbReference>
<dbReference type="Gene3D" id="3.30.160.60">
    <property type="entry name" value="Classic Zinc Finger"/>
    <property type="match status" value="1"/>
</dbReference>
<dbReference type="HAMAP" id="MF_03153">
    <property type="entry name" value="U1_C"/>
    <property type="match status" value="1"/>
</dbReference>
<dbReference type="IDEAL" id="IID00139"/>
<dbReference type="InterPro" id="IPR000690">
    <property type="entry name" value="Matrin/U1-C_Znf_C2H2"/>
</dbReference>
<dbReference type="InterPro" id="IPR003604">
    <property type="entry name" value="Matrin/U1-like-C_Znf_C2H2"/>
</dbReference>
<dbReference type="InterPro" id="IPR013085">
    <property type="entry name" value="U1-CZ_Znf_C2H2"/>
</dbReference>
<dbReference type="InterPro" id="IPR017340">
    <property type="entry name" value="U1_snRNP-C"/>
</dbReference>
<dbReference type="InterPro" id="IPR036236">
    <property type="entry name" value="Znf_C2H2_sf"/>
</dbReference>
<dbReference type="PANTHER" id="PTHR31148">
    <property type="entry name" value="U1 SMALL NUCLEAR RIBONUCLEOPROTEIN C"/>
    <property type="match status" value="1"/>
</dbReference>
<dbReference type="PANTHER" id="PTHR31148:SF1">
    <property type="entry name" value="U1 SMALL NUCLEAR RIBONUCLEOPROTEIN C"/>
    <property type="match status" value="1"/>
</dbReference>
<dbReference type="Pfam" id="PF06220">
    <property type="entry name" value="zf-U1"/>
    <property type="match status" value="1"/>
</dbReference>
<dbReference type="PIRSF" id="PIRSF037969">
    <property type="entry name" value="U1_snRNP-C"/>
    <property type="match status" value="1"/>
</dbReference>
<dbReference type="SMART" id="SM00451">
    <property type="entry name" value="ZnF_U1"/>
    <property type="match status" value="1"/>
</dbReference>
<dbReference type="SUPFAM" id="SSF57667">
    <property type="entry name" value="beta-beta-alpha zinc fingers"/>
    <property type="match status" value="1"/>
</dbReference>
<dbReference type="PROSITE" id="PS50171">
    <property type="entry name" value="ZF_MATRIN"/>
    <property type="match status" value="1"/>
</dbReference>
<feature type="chain" id="PRO_0000097525" description="U1 small nuclear ribonucleoprotein C">
    <location>
        <begin position="1"/>
        <end position="159"/>
    </location>
</feature>
<feature type="zinc finger region" description="Matrin-type" evidence="1">
    <location>
        <begin position="4"/>
        <end position="36"/>
    </location>
</feature>
<feature type="region of interest" description="Disordered" evidence="2">
    <location>
        <begin position="62"/>
        <end position="96"/>
    </location>
</feature>
<feature type="region of interest" description="Disordered" evidence="2">
    <location>
        <begin position="140"/>
        <end position="159"/>
    </location>
</feature>
<feature type="compositionally biased region" description="Pro residues" evidence="2">
    <location>
        <begin position="63"/>
        <end position="92"/>
    </location>
</feature>
<feature type="modified residue" description="Phosphotyrosine" evidence="13">
    <location>
        <position position="8"/>
    </location>
</feature>
<feature type="modified residue" description="Phosphoserine" evidence="14 16">
    <location>
        <position position="17"/>
    </location>
</feature>
<feature type="modified residue" description="N6-acetyllysine" evidence="15">
    <location>
        <position position="52"/>
    </location>
</feature>
<feature type="mutagenesis site" description="Abolishes the binding to U1 snRNP." evidence="6">
    <original>C</original>
    <variation>S</variation>
    <location>
        <position position="6"/>
    </location>
</feature>
<feature type="mutagenesis site" description="Abolishes the binding to U1 snRNP." evidence="6">
    <original>C</original>
    <variation>S</variation>
    <location>
        <position position="9"/>
    </location>
</feature>
<feature type="mutagenesis site" description="Abolishes the binding to U1 snRNP." evidence="6">
    <original>H</original>
    <variation>Q</variation>
    <location>
        <position position="24"/>
    </location>
</feature>
<feature type="mutagenesis site" description="No effect." evidence="6">
    <original>C</original>
    <variation>S</variation>
    <location>
        <position position="25"/>
    </location>
</feature>
<feature type="mutagenesis site" description="Abolishes the binding to U1 snRNP." evidence="6">
    <original>H</original>
    <variation>Q</variation>
    <location>
        <position position="30"/>
    </location>
</feature>
<feature type="sequence conflict" description="In Ref. 3; AAA36618." evidence="11" ref="3">
    <original>CSG</original>
    <variation>RSR</variation>
    <location>
        <begin position="25"/>
        <end position="27"/>
    </location>
</feature>
<feature type="sequence conflict" description="In Ref. 3; AAA36618." evidence="11" ref="3">
    <original>APHMG</original>
    <variation>TPIW</variation>
    <location>
        <begin position="94"/>
        <end position="98"/>
    </location>
</feature>
<feature type="sequence conflict" description="In Ref. 3; AAA36618." evidence="11" ref="3">
    <original>P</original>
    <variation>S</variation>
    <location>
        <position position="101"/>
    </location>
</feature>
<feature type="sequence conflict" description="In Ref. 3; AAA36618." evidence="11" ref="3">
    <original>HMP</original>
    <variation>ICQ</variation>
    <location>
        <begin position="129"/>
        <end position="131"/>
    </location>
</feature>
<feature type="strand" evidence="18">
    <location>
        <begin position="4"/>
        <end position="6"/>
    </location>
</feature>
<feature type="turn" evidence="18">
    <location>
        <begin position="7"/>
        <end position="10"/>
    </location>
</feature>
<feature type="strand" evidence="18">
    <location>
        <begin position="11"/>
        <end position="15"/>
    </location>
</feature>
<feature type="helix" evidence="18">
    <location>
        <begin position="18"/>
        <end position="25"/>
    </location>
</feature>
<feature type="helix" evidence="17">
    <location>
        <begin position="36"/>
        <end position="58"/>
    </location>
</feature>
<accession>P09234</accession>
<accession>Q5TAL3</accession>